<proteinExistence type="inferred from homology"/>
<comment type="function">
    <text evidence="1">RNA chaperone that binds small regulatory RNA (sRNAs) and mRNAs to facilitate mRNA translational regulation in response to envelope stress, environmental stress and changes in metabolite concentrations. Also binds with high specificity to tRNAs.</text>
</comment>
<comment type="subunit">
    <text evidence="1">Homohexamer.</text>
</comment>
<comment type="similarity">
    <text evidence="1">Belongs to the Hfq family.</text>
</comment>
<gene>
    <name evidence="1" type="primary">hfq</name>
    <name type="ordered locus">DSY1586</name>
</gene>
<sequence length="83" mass="9410">MNKAPINLQDTFLNQVRKENMPVTIYLVNGFQLKGLVRGFDNFTVVIEFEGKQQMVYKHAISTVMPLRPINLVAASQASAEER</sequence>
<evidence type="ECO:0000255" key="1">
    <source>
        <dbReference type="HAMAP-Rule" id="MF_00436"/>
    </source>
</evidence>
<evidence type="ECO:0000255" key="2">
    <source>
        <dbReference type="PROSITE-ProRule" id="PRU01346"/>
    </source>
</evidence>
<keyword id="KW-1185">Reference proteome</keyword>
<keyword id="KW-0694">RNA-binding</keyword>
<keyword id="KW-0346">Stress response</keyword>
<accession>Q24X67</accession>
<feature type="chain" id="PRO_0000265153" description="RNA-binding protein Hfq">
    <location>
        <begin position="1"/>
        <end position="83"/>
    </location>
</feature>
<feature type="domain" description="Sm" evidence="2">
    <location>
        <begin position="10"/>
        <end position="70"/>
    </location>
</feature>
<organism>
    <name type="scientific">Desulfitobacterium hafniense (strain Y51)</name>
    <dbReference type="NCBI Taxonomy" id="138119"/>
    <lineage>
        <taxon>Bacteria</taxon>
        <taxon>Bacillati</taxon>
        <taxon>Bacillota</taxon>
        <taxon>Clostridia</taxon>
        <taxon>Eubacteriales</taxon>
        <taxon>Desulfitobacteriaceae</taxon>
        <taxon>Desulfitobacterium</taxon>
    </lineage>
</organism>
<dbReference type="EMBL" id="AP008230">
    <property type="protein sequence ID" value="BAE83375.1"/>
    <property type="molecule type" value="Genomic_DNA"/>
</dbReference>
<dbReference type="RefSeq" id="WP_005811582.1">
    <property type="nucleotide sequence ID" value="NC_007907.1"/>
</dbReference>
<dbReference type="SMR" id="Q24X67"/>
<dbReference type="STRING" id="138119.DSY1586"/>
<dbReference type="KEGG" id="dsy:DSY1586"/>
<dbReference type="eggNOG" id="COG1923">
    <property type="taxonomic scope" value="Bacteria"/>
</dbReference>
<dbReference type="HOGENOM" id="CLU_113688_0_2_9"/>
<dbReference type="Proteomes" id="UP000001946">
    <property type="component" value="Chromosome"/>
</dbReference>
<dbReference type="GO" id="GO:0005829">
    <property type="term" value="C:cytosol"/>
    <property type="evidence" value="ECO:0007669"/>
    <property type="project" value="TreeGrafter"/>
</dbReference>
<dbReference type="GO" id="GO:0003723">
    <property type="term" value="F:RNA binding"/>
    <property type="evidence" value="ECO:0007669"/>
    <property type="project" value="UniProtKB-UniRule"/>
</dbReference>
<dbReference type="GO" id="GO:0006355">
    <property type="term" value="P:regulation of DNA-templated transcription"/>
    <property type="evidence" value="ECO:0007669"/>
    <property type="project" value="InterPro"/>
</dbReference>
<dbReference type="GO" id="GO:0043487">
    <property type="term" value="P:regulation of RNA stability"/>
    <property type="evidence" value="ECO:0007669"/>
    <property type="project" value="TreeGrafter"/>
</dbReference>
<dbReference type="GO" id="GO:0045974">
    <property type="term" value="P:regulation of translation, ncRNA-mediated"/>
    <property type="evidence" value="ECO:0007669"/>
    <property type="project" value="TreeGrafter"/>
</dbReference>
<dbReference type="CDD" id="cd01716">
    <property type="entry name" value="Hfq"/>
    <property type="match status" value="1"/>
</dbReference>
<dbReference type="FunFam" id="2.30.30.100:FF:000012">
    <property type="entry name" value="RNA-binding protein Hfq"/>
    <property type="match status" value="1"/>
</dbReference>
<dbReference type="Gene3D" id="2.30.30.100">
    <property type="match status" value="1"/>
</dbReference>
<dbReference type="HAMAP" id="MF_00436">
    <property type="entry name" value="Hfq"/>
    <property type="match status" value="1"/>
</dbReference>
<dbReference type="InterPro" id="IPR005001">
    <property type="entry name" value="Hfq"/>
</dbReference>
<dbReference type="InterPro" id="IPR010920">
    <property type="entry name" value="LSM_dom_sf"/>
</dbReference>
<dbReference type="InterPro" id="IPR047575">
    <property type="entry name" value="Sm"/>
</dbReference>
<dbReference type="NCBIfam" id="TIGR02383">
    <property type="entry name" value="Hfq"/>
    <property type="match status" value="1"/>
</dbReference>
<dbReference type="NCBIfam" id="NF001602">
    <property type="entry name" value="PRK00395.1"/>
    <property type="match status" value="1"/>
</dbReference>
<dbReference type="PANTHER" id="PTHR34772">
    <property type="entry name" value="RNA-BINDING PROTEIN HFQ"/>
    <property type="match status" value="1"/>
</dbReference>
<dbReference type="PANTHER" id="PTHR34772:SF1">
    <property type="entry name" value="RNA-BINDING PROTEIN HFQ"/>
    <property type="match status" value="1"/>
</dbReference>
<dbReference type="Pfam" id="PF17209">
    <property type="entry name" value="Hfq"/>
    <property type="match status" value="1"/>
</dbReference>
<dbReference type="SUPFAM" id="SSF50182">
    <property type="entry name" value="Sm-like ribonucleoproteins"/>
    <property type="match status" value="1"/>
</dbReference>
<dbReference type="PROSITE" id="PS52002">
    <property type="entry name" value="SM"/>
    <property type="match status" value="1"/>
</dbReference>
<protein>
    <recommendedName>
        <fullName evidence="1">RNA-binding protein Hfq</fullName>
    </recommendedName>
</protein>
<name>HFQ_DESHY</name>
<reference key="1">
    <citation type="journal article" date="2006" name="J. Bacteriol.">
        <title>Complete genome sequence of the dehalorespiring bacterium Desulfitobacterium hafniense Y51 and comparison with Dehalococcoides ethenogenes 195.</title>
        <authorList>
            <person name="Nonaka H."/>
            <person name="Keresztes G."/>
            <person name="Shinoda Y."/>
            <person name="Ikenaga Y."/>
            <person name="Abe M."/>
            <person name="Naito K."/>
            <person name="Inatomi K."/>
            <person name="Furukawa K."/>
            <person name="Inui M."/>
            <person name="Yukawa H."/>
        </authorList>
    </citation>
    <scope>NUCLEOTIDE SEQUENCE [LARGE SCALE GENOMIC DNA]</scope>
    <source>
        <strain>Y51</strain>
    </source>
</reference>